<name>RUVC_HAEDU</name>
<accession>Q7VNF5</accession>
<gene>
    <name evidence="1" type="primary">ruvC</name>
    <name type="ordered locus">HD_0593</name>
</gene>
<reference key="1">
    <citation type="submission" date="2003-06" db="EMBL/GenBank/DDBJ databases">
        <title>The complete genome sequence of Haemophilus ducreyi.</title>
        <authorList>
            <person name="Munson R.S. Jr."/>
            <person name="Ray W.C."/>
            <person name="Mahairas G."/>
            <person name="Sabo P."/>
            <person name="Mungur R."/>
            <person name="Johnson L."/>
            <person name="Nguyen D."/>
            <person name="Wang J."/>
            <person name="Forst C."/>
            <person name="Hood L."/>
        </authorList>
    </citation>
    <scope>NUCLEOTIDE SEQUENCE [LARGE SCALE GENOMIC DNA]</scope>
    <source>
        <strain>35000HP / ATCC 700724</strain>
    </source>
</reference>
<evidence type="ECO:0000255" key="1">
    <source>
        <dbReference type="HAMAP-Rule" id="MF_00034"/>
    </source>
</evidence>
<protein>
    <recommendedName>
        <fullName evidence="1">Crossover junction endodeoxyribonuclease RuvC</fullName>
        <ecNumber evidence="1">3.1.21.10</ecNumber>
    </recommendedName>
    <alternativeName>
        <fullName evidence="1">Holliday junction nuclease RuvC</fullName>
    </alternativeName>
    <alternativeName>
        <fullName evidence="1">Holliday junction resolvase RuvC</fullName>
    </alternativeName>
</protein>
<feature type="chain" id="PRO_0000183101" description="Crossover junction endodeoxyribonuclease RuvC">
    <location>
        <begin position="1"/>
        <end position="192"/>
    </location>
</feature>
<feature type="active site" evidence="1">
    <location>
        <position position="8"/>
    </location>
</feature>
<feature type="active site" evidence="1">
    <location>
        <position position="67"/>
    </location>
</feature>
<feature type="active site" evidence="1">
    <location>
        <position position="139"/>
    </location>
</feature>
<feature type="binding site" evidence="1">
    <location>
        <position position="8"/>
    </location>
    <ligand>
        <name>Mg(2+)</name>
        <dbReference type="ChEBI" id="CHEBI:18420"/>
        <label>1</label>
    </ligand>
</feature>
<feature type="binding site" evidence="1">
    <location>
        <position position="67"/>
    </location>
    <ligand>
        <name>Mg(2+)</name>
        <dbReference type="ChEBI" id="CHEBI:18420"/>
        <label>2</label>
    </ligand>
</feature>
<feature type="binding site" evidence="1">
    <location>
        <position position="139"/>
    </location>
    <ligand>
        <name>Mg(2+)</name>
        <dbReference type="ChEBI" id="CHEBI:18420"/>
        <label>1</label>
    </ligand>
</feature>
<proteinExistence type="inferred from homology"/>
<dbReference type="EC" id="3.1.21.10" evidence="1"/>
<dbReference type="EMBL" id="AE017143">
    <property type="protein sequence ID" value="AAP95524.1"/>
    <property type="molecule type" value="Genomic_DNA"/>
</dbReference>
<dbReference type="RefSeq" id="WP_010944577.1">
    <property type="nucleotide sequence ID" value="NC_002940.2"/>
</dbReference>
<dbReference type="SMR" id="Q7VNF5"/>
<dbReference type="STRING" id="233412.HD_0593"/>
<dbReference type="KEGG" id="hdu:HD_0593"/>
<dbReference type="eggNOG" id="COG0817">
    <property type="taxonomic scope" value="Bacteria"/>
</dbReference>
<dbReference type="HOGENOM" id="CLU_091257_2_1_6"/>
<dbReference type="OrthoDB" id="9805499at2"/>
<dbReference type="Proteomes" id="UP000001022">
    <property type="component" value="Chromosome"/>
</dbReference>
<dbReference type="GO" id="GO:0005737">
    <property type="term" value="C:cytoplasm"/>
    <property type="evidence" value="ECO:0007669"/>
    <property type="project" value="UniProtKB-SubCell"/>
</dbReference>
<dbReference type="GO" id="GO:0048476">
    <property type="term" value="C:Holliday junction resolvase complex"/>
    <property type="evidence" value="ECO:0007669"/>
    <property type="project" value="UniProtKB-UniRule"/>
</dbReference>
<dbReference type="GO" id="GO:0008821">
    <property type="term" value="F:crossover junction DNA endonuclease activity"/>
    <property type="evidence" value="ECO:0007669"/>
    <property type="project" value="UniProtKB-UniRule"/>
</dbReference>
<dbReference type="GO" id="GO:0003677">
    <property type="term" value="F:DNA binding"/>
    <property type="evidence" value="ECO:0007669"/>
    <property type="project" value="UniProtKB-KW"/>
</dbReference>
<dbReference type="GO" id="GO:0000287">
    <property type="term" value="F:magnesium ion binding"/>
    <property type="evidence" value="ECO:0007669"/>
    <property type="project" value="UniProtKB-UniRule"/>
</dbReference>
<dbReference type="GO" id="GO:0006310">
    <property type="term" value="P:DNA recombination"/>
    <property type="evidence" value="ECO:0007669"/>
    <property type="project" value="UniProtKB-UniRule"/>
</dbReference>
<dbReference type="GO" id="GO:0006281">
    <property type="term" value="P:DNA repair"/>
    <property type="evidence" value="ECO:0007669"/>
    <property type="project" value="UniProtKB-UniRule"/>
</dbReference>
<dbReference type="CDD" id="cd16962">
    <property type="entry name" value="RuvC"/>
    <property type="match status" value="1"/>
</dbReference>
<dbReference type="FunFam" id="3.30.420.10:FF:000002">
    <property type="entry name" value="Crossover junction endodeoxyribonuclease RuvC"/>
    <property type="match status" value="1"/>
</dbReference>
<dbReference type="Gene3D" id="3.30.420.10">
    <property type="entry name" value="Ribonuclease H-like superfamily/Ribonuclease H"/>
    <property type="match status" value="1"/>
</dbReference>
<dbReference type="HAMAP" id="MF_00034">
    <property type="entry name" value="RuvC"/>
    <property type="match status" value="1"/>
</dbReference>
<dbReference type="InterPro" id="IPR012337">
    <property type="entry name" value="RNaseH-like_sf"/>
</dbReference>
<dbReference type="InterPro" id="IPR036397">
    <property type="entry name" value="RNaseH_sf"/>
</dbReference>
<dbReference type="InterPro" id="IPR020563">
    <property type="entry name" value="X-over_junc_endoDNase_Mg_BS"/>
</dbReference>
<dbReference type="InterPro" id="IPR002176">
    <property type="entry name" value="X-over_junc_endoDNase_RuvC"/>
</dbReference>
<dbReference type="NCBIfam" id="TIGR00228">
    <property type="entry name" value="ruvC"/>
    <property type="match status" value="1"/>
</dbReference>
<dbReference type="PANTHER" id="PTHR30194">
    <property type="entry name" value="CROSSOVER JUNCTION ENDODEOXYRIBONUCLEASE RUVC"/>
    <property type="match status" value="1"/>
</dbReference>
<dbReference type="PANTHER" id="PTHR30194:SF3">
    <property type="entry name" value="CROSSOVER JUNCTION ENDODEOXYRIBONUCLEASE RUVC"/>
    <property type="match status" value="1"/>
</dbReference>
<dbReference type="Pfam" id="PF02075">
    <property type="entry name" value="RuvC"/>
    <property type="match status" value="1"/>
</dbReference>
<dbReference type="PRINTS" id="PR00696">
    <property type="entry name" value="RSOLVASERUVC"/>
</dbReference>
<dbReference type="SUPFAM" id="SSF53098">
    <property type="entry name" value="Ribonuclease H-like"/>
    <property type="match status" value="1"/>
</dbReference>
<dbReference type="PROSITE" id="PS01321">
    <property type="entry name" value="RUVC"/>
    <property type="match status" value="1"/>
</dbReference>
<sequence length="192" mass="20970">MPIILGIDPGSRITGYGIIRQQGRQLEYLGSGAIRINASDLPSRLKHIYAGVTEIITQFQPDMFAIEQVFMAKNADSALKLGQARGTAIVAAVNHDLPVFEYAARLVKQTVTGIGSADKLQVQDMVTRMLQLSAKPQVDAADALAIAITHAHSIQHSLIVAKQNNPSITTHKEQILALMKTRYSRGRFRLKG</sequence>
<comment type="function">
    <text evidence="1">The RuvA-RuvB-RuvC complex processes Holliday junction (HJ) DNA during genetic recombination and DNA repair. Endonuclease that resolves HJ intermediates. Cleaves cruciform DNA by making single-stranded nicks across the HJ at symmetrical positions within the homologous arms, yielding a 5'-phosphate and a 3'-hydroxyl group; requires a central core of homology in the junction. The consensus cleavage sequence is 5'-(A/T)TT(C/G)-3'. Cleavage occurs on the 3'-side of the TT dinucleotide at the point of strand exchange. HJ branch migration catalyzed by RuvA-RuvB allows RuvC to scan DNA until it finds its consensus sequence, where it cleaves and resolves the cruciform DNA.</text>
</comment>
<comment type="catalytic activity">
    <reaction evidence="1">
        <text>Endonucleolytic cleavage at a junction such as a reciprocal single-stranded crossover between two homologous DNA duplexes (Holliday junction).</text>
        <dbReference type="EC" id="3.1.21.10"/>
    </reaction>
</comment>
<comment type="cofactor">
    <cofactor evidence="1">
        <name>Mg(2+)</name>
        <dbReference type="ChEBI" id="CHEBI:18420"/>
    </cofactor>
    <text evidence="1">Binds 2 Mg(2+) ion per subunit.</text>
</comment>
<comment type="subunit">
    <text evidence="1">Homodimer which binds Holliday junction (HJ) DNA. The HJ becomes 2-fold symmetrical on binding to RuvC with unstacked arms; it has a different conformation from HJ DNA in complex with RuvA. In the full resolvosome a probable DNA-RuvA(4)-RuvB(12)-RuvC(2) complex forms which resolves the HJ.</text>
</comment>
<comment type="subcellular location">
    <subcellularLocation>
        <location evidence="1">Cytoplasm</location>
    </subcellularLocation>
</comment>
<comment type="similarity">
    <text evidence="1">Belongs to the RuvC family.</text>
</comment>
<organism>
    <name type="scientific">Haemophilus ducreyi (strain 35000HP / ATCC 700724)</name>
    <dbReference type="NCBI Taxonomy" id="233412"/>
    <lineage>
        <taxon>Bacteria</taxon>
        <taxon>Pseudomonadati</taxon>
        <taxon>Pseudomonadota</taxon>
        <taxon>Gammaproteobacteria</taxon>
        <taxon>Pasteurellales</taxon>
        <taxon>Pasteurellaceae</taxon>
        <taxon>Haemophilus</taxon>
    </lineage>
</organism>
<keyword id="KW-0963">Cytoplasm</keyword>
<keyword id="KW-0227">DNA damage</keyword>
<keyword id="KW-0233">DNA recombination</keyword>
<keyword id="KW-0234">DNA repair</keyword>
<keyword id="KW-0238">DNA-binding</keyword>
<keyword id="KW-0255">Endonuclease</keyword>
<keyword id="KW-0378">Hydrolase</keyword>
<keyword id="KW-0460">Magnesium</keyword>
<keyword id="KW-0479">Metal-binding</keyword>
<keyword id="KW-0540">Nuclease</keyword>
<keyword id="KW-1185">Reference proteome</keyword>